<dbReference type="EMBL" id="D84670">
    <property type="protein sequence ID" value="BAA25165.1"/>
    <property type="molecule type" value="Genomic_DNA"/>
</dbReference>
<dbReference type="EMBL" id="AE009950">
    <property type="protein sequence ID" value="AAL80144.1"/>
    <property type="molecule type" value="Genomic_DNA"/>
</dbReference>
<dbReference type="PIR" id="T43935">
    <property type="entry name" value="T43935"/>
</dbReference>
<dbReference type="RefSeq" id="WP_011011132.1">
    <property type="nucleotide sequence ID" value="NZ_CP023154.1"/>
</dbReference>
<dbReference type="SMR" id="P81414"/>
<dbReference type="STRING" id="186497.PF0020"/>
<dbReference type="PaxDb" id="186497-PF0020"/>
<dbReference type="KEGG" id="pfu:PF0020"/>
<dbReference type="PATRIC" id="fig|186497.12.peg.22"/>
<dbReference type="eggNOG" id="arCOG00497">
    <property type="taxonomic scope" value="Archaea"/>
</dbReference>
<dbReference type="HOGENOM" id="CLU_070010_4_0_2"/>
<dbReference type="OrthoDB" id="28313at2157"/>
<dbReference type="PhylomeDB" id="P81414"/>
<dbReference type="Proteomes" id="UP000001013">
    <property type="component" value="Chromosome"/>
</dbReference>
<dbReference type="GO" id="GO:0016787">
    <property type="term" value="F:hydrolase activity"/>
    <property type="evidence" value="ECO:0007669"/>
    <property type="project" value="UniProtKB-KW"/>
</dbReference>
<dbReference type="Gene3D" id="3.60.15.10">
    <property type="entry name" value="Ribonuclease Z/Hydroxyacylglutathione hydrolase-like"/>
    <property type="match status" value="1"/>
</dbReference>
<dbReference type="InterPro" id="IPR001279">
    <property type="entry name" value="Metallo-B-lactamas"/>
</dbReference>
<dbReference type="InterPro" id="IPR036866">
    <property type="entry name" value="RibonucZ/Hydroxyglut_hydro"/>
</dbReference>
<dbReference type="InterPro" id="IPR050114">
    <property type="entry name" value="UPF0173_UPF0282_UlaG_hydrolase"/>
</dbReference>
<dbReference type="PANTHER" id="PTHR43546:SF8">
    <property type="entry name" value="METALLO-BETA-LACTAMASE DOMAIN-CONTAINING PROTEIN"/>
    <property type="match status" value="1"/>
</dbReference>
<dbReference type="PANTHER" id="PTHR43546">
    <property type="entry name" value="UPF0173 METAL-DEPENDENT HYDROLASE MJ1163-RELATED"/>
    <property type="match status" value="1"/>
</dbReference>
<dbReference type="Pfam" id="PF13483">
    <property type="entry name" value="Lactamase_B_3"/>
    <property type="match status" value="1"/>
</dbReference>
<dbReference type="SMART" id="SM00849">
    <property type="entry name" value="Lactamase_B"/>
    <property type="match status" value="1"/>
</dbReference>
<dbReference type="SUPFAM" id="SSF56281">
    <property type="entry name" value="Metallo-hydrolase/oxidoreductase"/>
    <property type="match status" value="1"/>
</dbReference>
<sequence length="210" mass="23835">MKIVWCGHACFLVEDRGTKILIDPYPDVDEDRIGKVDYILVTHEHMDHYGKTPLIAKLSDAEVIGPKTVYLMAISDGLTKVREIEVGQEIELGDIRVRAFFTEHPTSQYPLGYLIEGSKRVAHLGDTYYSPAFTELRGKVDVLLVPIGGKSTASVREAADIVEMIRPRIAVPMHYGTYSEADPEEFKKELQKRRIWVLVKDLKPYEGFEI</sequence>
<organism>
    <name type="scientific">Pyrococcus furiosus (strain ATCC 43587 / DSM 3638 / JCM 8422 / Vc1)</name>
    <dbReference type="NCBI Taxonomy" id="186497"/>
    <lineage>
        <taxon>Archaea</taxon>
        <taxon>Methanobacteriati</taxon>
        <taxon>Methanobacteriota</taxon>
        <taxon>Thermococci</taxon>
        <taxon>Thermococcales</taxon>
        <taxon>Thermococcaceae</taxon>
        <taxon>Pyrococcus</taxon>
    </lineage>
</organism>
<proteinExistence type="inferred from homology"/>
<evidence type="ECO:0000305" key="1"/>
<name>Y020_PYRFU</name>
<comment type="similarity">
    <text evidence="1">Belongs to the UPF0173 family.</text>
</comment>
<keyword id="KW-0378">Hydrolase</keyword>
<keyword id="KW-1185">Reference proteome</keyword>
<protein>
    <recommendedName>
        <fullName>UPF0173 protein PF0020</fullName>
    </recommendedName>
</protein>
<gene>
    <name type="ordered locus">PF0020</name>
</gene>
<accession>P81414</accession>
<reference key="1">
    <citation type="journal article" date="1997" name="Genes Cells">
        <title>A novel DNA polymerase in the hyperthermophilic archaeon, Pyrococcus furiosus: gene cloning, expression, and characterization.</title>
        <authorList>
            <person name="Uemori T."/>
            <person name="Sato Y."/>
            <person name="Kato I."/>
            <person name="Doi H."/>
            <person name="Ishino Y."/>
        </authorList>
    </citation>
    <scope>NUCLEOTIDE SEQUENCE [GENOMIC DNA]</scope>
    <source>
        <strain>ATCC 43587 / DSM 3638 / JCM 8422 / Vc1</strain>
    </source>
</reference>
<reference key="2">
    <citation type="journal article" date="1999" name="Genetics">
        <title>Divergence of the hyperthermophilic archaea Pyrococcus furiosus and P. horikoshii inferred from complete genomic sequences.</title>
        <authorList>
            <person name="Maeder D.L."/>
            <person name="Weiss R.B."/>
            <person name="Dunn D.M."/>
            <person name="Cherry J.L."/>
            <person name="Gonzalez J.M."/>
            <person name="DiRuggiero J."/>
            <person name="Robb F.T."/>
        </authorList>
    </citation>
    <scope>NUCLEOTIDE SEQUENCE [LARGE SCALE GENOMIC DNA]</scope>
    <source>
        <strain>ATCC 43587 / DSM 3638 / JCM 8422 / Vc1</strain>
    </source>
</reference>
<feature type="chain" id="PRO_0000156401" description="UPF0173 protein PF0020">
    <location>
        <begin position="1"/>
        <end position="210"/>
    </location>
</feature>